<feature type="chain" id="PRO_0000404202" description="Fascin-2">
    <location>
        <begin position="1"/>
        <end position="492"/>
    </location>
</feature>
<feature type="sequence variant" description="In prebycusis phenotype; when associated with waltzer cadherin 23 mutant." evidence="1">
    <original>R</original>
    <variation>H</variation>
    <location>
        <position position="109"/>
    </location>
</feature>
<feature type="sequence conflict" description="In Ref. 1; BAC34026." evidence="3" ref="1">
    <original>H</original>
    <variation>P</variation>
    <location>
        <position position="395"/>
    </location>
</feature>
<sequence>MPTNGLHQVLKIQFGLVNDADRYLTAESFGFKVNASAASLKRKQIWVLEPDPGQGTAVLFRSSHLGRYLSAEEDGRVACEMDQPGRDCRFLVLPQPDGRWVLQSEPHGRFFGGIEDRLSCFATAISPAELWTVHLAIHPQAHLLSVSRRRYVHLCLQEDEMAADGDMPWGVDALVTLIFQSRRYCLKSYDSRYLRSDGRLVWEPEAHACYTLEFKAGKLAFKDCDGRYLAPVGPAGTLKAGRNTRPSKDELFDLEQSHPQVVLVAANRRYISVRQGINVSANQDEELGHETFLMQIDQETKKCTFYSSTGGYWTLVTHGGIQATATQVSANTMFEIEWHGRRVALKASNGRFVCMKKNGQLAAISDFVGEDELFTLKLINRPLLVLRGLDGFVCHRRGSNQLDTNRSTYDVFHLSFRDGAYQIRGRGGGFWYTGSHGSVCSDGDLAEDFLFEFRERGRLAIRALSGKYLRGGASGLLRADADLPVGEALWEY</sequence>
<gene>
    <name type="primary">Fscn2</name>
</gene>
<evidence type="ECO:0000269" key="1">
    <source>
    </source>
</evidence>
<evidence type="ECO:0000269" key="2">
    <source>
    </source>
</evidence>
<evidence type="ECO:0000305" key="3"/>
<protein>
    <recommendedName>
        <fullName>Fascin-2</fullName>
    </recommendedName>
    <alternativeName>
        <fullName>Retinal fascin</fullName>
    </alternativeName>
</protein>
<proteinExistence type="evidence at transcript level"/>
<comment type="function">
    <text evidence="1">Acts as an actin bundling protein. May play a pivotal role in photoreceptor cell-specific events, such as disk morphogenesis. Important for maintaining functional hair-cell bundles in the inner ear. May stiffen the longer stereocilia of hair-cell bundles in the inner ear enabling better force transmission to tip links.</text>
</comment>
<comment type="subcellular location">
    <subcellularLocation>
        <location evidence="1">Cytoplasm</location>
        <location evidence="1">Cytoskeleton</location>
    </subcellularLocation>
    <subcellularLocation>
        <location evidence="1 2">Cell projection</location>
        <location evidence="1 2">Stereocilium</location>
    </subcellularLocation>
    <text>Found mostly in longer hair-cell stereocilia and, in all stereocilia, present in gradient with the highest concentration at stereocilia tips.</text>
</comment>
<comment type="tissue specificity">
    <text evidence="2">Expressed in the inner ear. Abundant in the utricle.</text>
</comment>
<comment type="developmental stage">
    <text>Developmentally regulated, appearing in inner-hair cell stereocilia during final stages of elongation.</text>
</comment>
<comment type="disease">
    <text evidence="1">Defects in Fscn2 lead to hair-cell degeneration in the inner ear and are a key contributor to the early-onset, age-related hearing loss (prebycusis) phenotype when in combination with waltzer cadherin 23 mutant.</text>
</comment>
<comment type="similarity">
    <text evidence="3">Belongs to the fascin family.</text>
</comment>
<dbReference type="EMBL" id="AK050002">
    <property type="protein sequence ID" value="BAC34026.1"/>
    <property type="molecule type" value="mRNA"/>
</dbReference>
<dbReference type="EMBL" id="AL669855">
    <property type="status" value="NOT_ANNOTATED_CDS"/>
    <property type="molecule type" value="Genomic_DNA"/>
</dbReference>
<dbReference type="EMBL" id="CH466558">
    <property type="protein sequence ID" value="EDL34739.1"/>
    <property type="molecule type" value="Genomic_DNA"/>
</dbReference>
<dbReference type="EMBL" id="BC109356">
    <property type="protein sequence ID" value="AAI09357.1"/>
    <property type="molecule type" value="mRNA"/>
</dbReference>
<dbReference type="EMBL" id="BC109357">
    <property type="protein sequence ID" value="AAI09358.1"/>
    <property type="molecule type" value="mRNA"/>
</dbReference>
<dbReference type="CCDS" id="CCDS25731.1"/>
<dbReference type="RefSeq" id="NP_766390.2">
    <property type="nucleotide sequence ID" value="NM_172802.4"/>
</dbReference>
<dbReference type="SMR" id="Q32M02"/>
<dbReference type="CORUM" id="Q32M02"/>
<dbReference type="FunCoup" id="Q32M02">
    <property type="interactions" value="190"/>
</dbReference>
<dbReference type="STRING" id="10090.ENSMUSP00000026445"/>
<dbReference type="PhosphoSitePlus" id="Q32M02"/>
<dbReference type="PaxDb" id="10090-ENSMUSP00000026445"/>
<dbReference type="ProteomicsDB" id="266867"/>
<dbReference type="Antibodypedia" id="32856">
    <property type="antibodies" value="123 antibodies from 26 providers"/>
</dbReference>
<dbReference type="DNASU" id="238021"/>
<dbReference type="Ensembl" id="ENSMUST00000026445.3">
    <property type="protein sequence ID" value="ENSMUSP00000026445.3"/>
    <property type="gene ID" value="ENSMUSG00000025380.3"/>
</dbReference>
<dbReference type="GeneID" id="238021"/>
<dbReference type="KEGG" id="mmu:238021"/>
<dbReference type="UCSC" id="uc007msk.2">
    <property type="organism name" value="mouse"/>
</dbReference>
<dbReference type="AGR" id="MGI:2443337"/>
<dbReference type="CTD" id="25794"/>
<dbReference type="MGI" id="MGI:2443337">
    <property type="gene designation" value="Fscn2"/>
</dbReference>
<dbReference type="VEuPathDB" id="HostDB:ENSMUSG00000025380"/>
<dbReference type="eggNOG" id="ENOG502QPRX">
    <property type="taxonomic scope" value="Eukaryota"/>
</dbReference>
<dbReference type="GeneTree" id="ENSGT00950000183157"/>
<dbReference type="HOGENOM" id="CLU_030960_2_0_1"/>
<dbReference type="InParanoid" id="Q32M02"/>
<dbReference type="OMA" id="EPYQRYF"/>
<dbReference type="OrthoDB" id="10259868at2759"/>
<dbReference type="PhylomeDB" id="Q32M02"/>
<dbReference type="TreeFam" id="TF323992"/>
<dbReference type="BioGRID-ORCS" id="238021">
    <property type="hits" value="1 hit in 79 CRISPR screens"/>
</dbReference>
<dbReference type="PRO" id="PR:Q32M02"/>
<dbReference type="Proteomes" id="UP000000589">
    <property type="component" value="Chromosome 11"/>
</dbReference>
<dbReference type="RNAct" id="Q32M02">
    <property type="molecule type" value="protein"/>
</dbReference>
<dbReference type="Bgee" id="ENSMUSG00000025380">
    <property type="expression patterns" value="Expressed in retinal neural layer and 47 other cell types or tissues"/>
</dbReference>
<dbReference type="GO" id="GO:0015629">
    <property type="term" value="C:actin cytoskeleton"/>
    <property type="evidence" value="ECO:0000314"/>
    <property type="project" value="UniProtKB"/>
</dbReference>
<dbReference type="GO" id="GO:0005829">
    <property type="term" value="C:cytosol"/>
    <property type="evidence" value="ECO:0000304"/>
    <property type="project" value="Reactome"/>
</dbReference>
<dbReference type="GO" id="GO:0032420">
    <property type="term" value="C:stereocilium"/>
    <property type="evidence" value="ECO:0000314"/>
    <property type="project" value="UniProtKB"/>
</dbReference>
<dbReference type="GO" id="GO:0003779">
    <property type="term" value="F:actin binding"/>
    <property type="evidence" value="ECO:0000250"/>
    <property type="project" value="UniProtKB"/>
</dbReference>
<dbReference type="GO" id="GO:0051015">
    <property type="term" value="F:actin filament binding"/>
    <property type="evidence" value="ECO:0000250"/>
    <property type="project" value="UniProtKB"/>
</dbReference>
<dbReference type="GO" id="GO:0030674">
    <property type="term" value="F:protein-macromolecule adaptor activity"/>
    <property type="evidence" value="ECO:0007669"/>
    <property type="project" value="InterPro"/>
</dbReference>
<dbReference type="GO" id="GO:0030036">
    <property type="term" value="P:actin cytoskeleton organization"/>
    <property type="evidence" value="ECO:0000250"/>
    <property type="project" value="UniProtKB"/>
</dbReference>
<dbReference type="GO" id="GO:0007015">
    <property type="term" value="P:actin filament organization"/>
    <property type="evidence" value="ECO:0007669"/>
    <property type="project" value="InterPro"/>
</dbReference>
<dbReference type="GO" id="GO:0042462">
    <property type="term" value="P:eye photoreceptor cell development"/>
    <property type="evidence" value="ECO:0000315"/>
    <property type="project" value="MGI"/>
</dbReference>
<dbReference type="CDD" id="cd23345">
    <property type="entry name" value="beta-trefoil_FSCN2_rpt1"/>
    <property type="match status" value="1"/>
</dbReference>
<dbReference type="FunFam" id="2.80.10.50:FF:000008">
    <property type="entry name" value="Fascin"/>
    <property type="match status" value="1"/>
</dbReference>
<dbReference type="FunFam" id="2.80.10.50:FF:000010">
    <property type="entry name" value="Fascin"/>
    <property type="match status" value="1"/>
</dbReference>
<dbReference type="FunFam" id="2.80.10.50:FF:000015">
    <property type="entry name" value="Fascin"/>
    <property type="match status" value="1"/>
</dbReference>
<dbReference type="FunFam" id="2.80.10.50:FF:000037">
    <property type="entry name" value="Fascin"/>
    <property type="match status" value="1"/>
</dbReference>
<dbReference type="Gene3D" id="2.80.10.50">
    <property type="match status" value="4"/>
</dbReference>
<dbReference type="InterPro" id="IPR008999">
    <property type="entry name" value="Actin-crosslinking"/>
</dbReference>
<dbReference type="InterPro" id="IPR010431">
    <property type="entry name" value="Fascin"/>
</dbReference>
<dbReference type="InterPro" id="IPR022768">
    <property type="entry name" value="Fascin-like_dom"/>
</dbReference>
<dbReference type="InterPro" id="IPR024703">
    <property type="entry name" value="Fascin_metazoans"/>
</dbReference>
<dbReference type="PANTHER" id="PTHR10551">
    <property type="entry name" value="FASCIN"/>
    <property type="match status" value="1"/>
</dbReference>
<dbReference type="PANTHER" id="PTHR10551:SF9">
    <property type="entry name" value="FASCIN-2"/>
    <property type="match status" value="1"/>
</dbReference>
<dbReference type="Pfam" id="PF06268">
    <property type="entry name" value="Fascin"/>
    <property type="match status" value="4"/>
</dbReference>
<dbReference type="PIRSF" id="PIRSF005682">
    <property type="entry name" value="Fascin"/>
    <property type="match status" value="1"/>
</dbReference>
<dbReference type="SUPFAM" id="SSF50405">
    <property type="entry name" value="Actin-crosslinking proteins"/>
    <property type="match status" value="4"/>
</dbReference>
<organism>
    <name type="scientific">Mus musculus</name>
    <name type="common">Mouse</name>
    <dbReference type="NCBI Taxonomy" id="10090"/>
    <lineage>
        <taxon>Eukaryota</taxon>
        <taxon>Metazoa</taxon>
        <taxon>Chordata</taxon>
        <taxon>Craniata</taxon>
        <taxon>Vertebrata</taxon>
        <taxon>Euteleostomi</taxon>
        <taxon>Mammalia</taxon>
        <taxon>Eutheria</taxon>
        <taxon>Euarchontoglires</taxon>
        <taxon>Glires</taxon>
        <taxon>Rodentia</taxon>
        <taxon>Myomorpha</taxon>
        <taxon>Muroidea</taxon>
        <taxon>Muridae</taxon>
        <taxon>Murinae</taxon>
        <taxon>Mus</taxon>
        <taxon>Mus</taxon>
    </lineage>
</organism>
<keyword id="KW-0009">Actin-binding</keyword>
<keyword id="KW-0966">Cell projection</keyword>
<keyword id="KW-0963">Cytoplasm</keyword>
<keyword id="KW-0206">Cytoskeleton</keyword>
<keyword id="KW-1185">Reference proteome</keyword>
<accession>Q32M02</accession>
<accession>Q8BWU0</accession>
<name>FSCN2_MOUSE</name>
<reference key="1">
    <citation type="journal article" date="2005" name="Science">
        <title>The transcriptional landscape of the mammalian genome.</title>
        <authorList>
            <person name="Carninci P."/>
            <person name="Kasukawa T."/>
            <person name="Katayama S."/>
            <person name="Gough J."/>
            <person name="Frith M.C."/>
            <person name="Maeda N."/>
            <person name="Oyama R."/>
            <person name="Ravasi T."/>
            <person name="Lenhard B."/>
            <person name="Wells C."/>
            <person name="Kodzius R."/>
            <person name="Shimokawa K."/>
            <person name="Bajic V.B."/>
            <person name="Brenner S.E."/>
            <person name="Batalov S."/>
            <person name="Forrest A.R."/>
            <person name="Zavolan M."/>
            <person name="Davis M.J."/>
            <person name="Wilming L.G."/>
            <person name="Aidinis V."/>
            <person name="Allen J.E."/>
            <person name="Ambesi-Impiombato A."/>
            <person name="Apweiler R."/>
            <person name="Aturaliya R.N."/>
            <person name="Bailey T.L."/>
            <person name="Bansal M."/>
            <person name="Baxter L."/>
            <person name="Beisel K.W."/>
            <person name="Bersano T."/>
            <person name="Bono H."/>
            <person name="Chalk A.M."/>
            <person name="Chiu K.P."/>
            <person name="Choudhary V."/>
            <person name="Christoffels A."/>
            <person name="Clutterbuck D.R."/>
            <person name="Crowe M.L."/>
            <person name="Dalla E."/>
            <person name="Dalrymple B.P."/>
            <person name="de Bono B."/>
            <person name="Della Gatta G."/>
            <person name="di Bernardo D."/>
            <person name="Down T."/>
            <person name="Engstrom P."/>
            <person name="Fagiolini M."/>
            <person name="Faulkner G."/>
            <person name="Fletcher C.F."/>
            <person name="Fukushima T."/>
            <person name="Furuno M."/>
            <person name="Futaki S."/>
            <person name="Gariboldi M."/>
            <person name="Georgii-Hemming P."/>
            <person name="Gingeras T.R."/>
            <person name="Gojobori T."/>
            <person name="Green R.E."/>
            <person name="Gustincich S."/>
            <person name="Harbers M."/>
            <person name="Hayashi Y."/>
            <person name="Hensch T.K."/>
            <person name="Hirokawa N."/>
            <person name="Hill D."/>
            <person name="Huminiecki L."/>
            <person name="Iacono M."/>
            <person name="Ikeo K."/>
            <person name="Iwama A."/>
            <person name="Ishikawa T."/>
            <person name="Jakt M."/>
            <person name="Kanapin A."/>
            <person name="Katoh M."/>
            <person name="Kawasawa Y."/>
            <person name="Kelso J."/>
            <person name="Kitamura H."/>
            <person name="Kitano H."/>
            <person name="Kollias G."/>
            <person name="Krishnan S.P."/>
            <person name="Kruger A."/>
            <person name="Kummerfeld S.K."/>
            <person name="Kurochkin I.V."/>
            <person name="Lareau L.F."/>
            <person name="Lazarevic D."/>
            <person name="Lipovich L."/>
            <person name="Liu J."/>
            <person name="Liuni S."/>
            <person name="McWilliam S."/>
            <person name="Madan Babu M."/>
            <person name="Madera M."/>
            <person name="Marchionni L."/>
            <person name="Matsuda H."/>
            <person name="Matsuzawa S."/>
            <person name="Miki H."/>
            <person name="Mignone F."/>
            <person name="Miyake S."/>
            <person name="Morris K."/>
            <person name="Mottagui-Tabar S."/>
            <person name="Mulder N."/>
            <person name="Nakano N."/>
            <person name="Nakauchi H."/>
            <person name="Ng P."/>
            <person name="Nilsson R."/>
            <person name="Nishiguchi S."/>
            <person name="Nishikawa S."/>
            <person name="Nori F."/>
            <person name="Ohara O."/>
            <person name="Okazaki Y."/>
            <person name="Orlando V."/>
            <person name="Pang K.C."/>
            <person name="Pavan W.J."/>
            <person name="Pavesi G."/>
            <person name="Pesole G."/>
            <person name="Petrovsky N."/>
            <person name="Piazza S."/>
            <person name="Reed J."/>
            <person name="Reid J.F."/>
            <person name="Ring B.Z."/>
            <person name="Ringwald M."/>
            <person name="Rost B."/>
            <person name="Ruan Y."/>
            <person name="Salzberg S.L."/>
            <person name="Sandelin A."/>
            <person name="Schneider C."/>
            <person name="Schoenbach C."/>
            <person name="Sekiguchi K."/>
            <person name="Semple C.A."/>
            <person name="Seno S."/>
            <person name="Sessa L."/>
            <person name="Sheng Y."/>
            <person name="Shibata Y."/>
            <person name="Shimada H."/>
            <person name="Shimada K."/>
            <person name="Silva D."/>
            <person name="Sinclair B."/>
            <person name="Sperling S."/>
            <person name="Stupka E."/>
            <person name="Sugiura K."/>
            <person name="Sultana R."/>
            <person name="Takenaka Y."/>
            <person name="Taki K."/>
            <person name="Tammoja K."/>
            <person name="Tan S.L."/>
            <person name="Tang S."/>
            <person name="Taylor M.S."/>
            <person name="Tegner J."/>
            <person name="Teichmann S.A."/>
            <person name="Ueda H.R."/>
            <person name="van Nimwegen E."/>
            <person name="Verardo R."/>
            <person name="Wei C.L."/>
            <person name="Yagi K."/>
            <person name="Yamanishi H."/>
            <person name="Zabarovsky E."/>
            <person name="Zhu S."/>
            <person name="Zimmer A."/>
            <person name="Hide W."/>
            <person name="Bult C."/>
            <person name="Grimmond S.M."/>
            <person name="Teasdale R.D."/>
            <person name="Liu E.T."/>
            <person name="Brusic V."/>
            <person name="Quackenbush J."/>
            <person name="Wahlestedt C."/>
            <person name="Mattick J.S."/>
            <person name="Hume D.A."/>
            <person name="Kai C."/>
            <person name="Sasaki D."/>
            <person name="Tomaru Y."/>
            <person name="Fukuda S."/>
            <person name="Kanamori-Katayama M."/>
            <person name="Suzuki M."/>
            <person name="Aoki J."/>
            <person name="Arakawa T."/>
            <person name="Iida J."/>
            <person name="Imamura K."/>
            <person name="Itoh M."/>
            <person name="Kato T."/>
            <person name="Kawaji H."/>
            <person name="Kawagashira N."/>
            <person name="Kawashima T."/>
            <person name="Kojima M."/>
            <person name="Kondo S."/>
            <person name="Konno H."/>
            <person name="Nakano K."/>
            <person name="Ninomiya N."/>
            <person name="Nishio T."/>
            <person name="Okada M."/>
            <person name="Plessy C."/>
            <person name="Shibata K."/>
            <person name="Shiraki T."/>
            <person name="Suzuki S."/>
            <person name="Tagami M."/>
            <person name="Waki K."/>
            <person name="Watahiki A."/>
            <person name="Okamura-Oho Y."/>
            <person name="Suzuki H."/>
            <person name="Kawai J."/>
            <person name="Hayashizaki Y."/>
        </authorList>
    </citation>
    <scope>NUCLEOTIDE SEQUENCE [LARGE SCALE MRNA]</scope>
    <source>
        <strain>C57BL/6J</strain>
        <tissue>Hippocampus</tissue>
    </source>
</reference>
<reference key="2">
    <citation type="journal article" date="2009" name="PLoS Biol.">
        <title>Lineage-specific biology revealed by a finished genome assembly of the mouse.</title>
        <authorList>
            <person name="Church D.M."/>
            <person name="Goodstadt L."/>
            <person name="Hillier L.W."/>
            <person name="Zody M.C."/>
            <person name="Goldstein S."/>
            <person name="She X."/>
            <person name="Bult C.J."/>
            <person name="Agarwala R."/>
            <person name="Cherry J.L."/>
            <person name="DiCuccio M."/>
            <person name="Hlavina W."/>
            <person name="Kapustin Y."/>
            <person name="Meric P."/>
            <person name="Maglott D."/>
            <person name="Birtle Z."/>
            <person name="Marques A.C."/>
            <person name="Graves T."/>
            <person name="Zhou S."/>
            <person name="Teague B."/>
            <person name="Potamousis K."/>
            <person name="Churas C."/>
            <person name="Place M."/>
            <person name="Herschleb J."/>
            <person name="Runnheim R."/>
            <person name="Forrest D."/>
            <person name="Amos-Landgraf J."/>
            <person name="Schwartz D.C."/>
            <person name="Cheng Z."/>
            <person name="Lindblad-Toh K."/>
            <person name="Eichler E.E."/>
            <person name="Ponting C.P."/>
        </authorList>
    </citation>
    <scope>NUCLEOTIDE SEQUENCE [LARGE SCALE GENOMIC DNA]</scope>
    <source>
        <strain>C57BL/6J</strain>
    </source>
</reference>
<reference key="3">
    <citation type="submission" date="2005-07" db="EMBL/GenBank/DDBJ databases">
        <authorList>
            <person name="Mural R.J."/>
            <person name="Adams M.D."/>
            <person name="Myers E.W."/>
            <person name="Smith H.O."/>
            <person name="Venter J.C."/>
        </authorList>
    </citation>
    <scope>NUCLEOTIDE SEQUENCE [LARGE SCALE GENOMIC DNA]</scope>
</reference>
<reference key="4">
    <citation type="journal article" date="2004" name="Genome Res.">
        <title>The status, quality, and expansion of the NIH full-length cDNA project: the Mammalian Gene Collection (MGC).</title>
        <authorList>
            <consortium name="The MGC Project Team"/>
        </authorList>
    </citation>
    <scope>NUCLEOTIDE SEQUENCE [LARGE SCALE MRNA]</scope>
</reference>
<reference key="5">
    <citation type="journal article" date="2010" name="J. Neurosci.">
        <title>The R109H variant of fascin-2, a developmentally regulated actin crosslinker in hair-cell stereocilia, underlies early-onset hearing loss of DBA/2J mice.</title>
        <authorList>
            <person name="Shin J.B."/>
            <person name="Longo-Guess C.M."/>
            <person name="Gagnon L.H."/>
            <person name="Saylor K.W."/>
            <person name="Dumont R.A."/>
            <person name="Spinelli K.J."/>
            <person name="Pagana J.M."/>
            <person name="Wilmarth P.A."/>
            <person name="David L.L."/>
            <person name="Gillespie P.G."/>
            <person name="Johnson K.R."/>
        </authorList>
    </citation>
    <scope>FUNCTION</scope>
    <scope>SUBCELLULAR LOCATION</scope>
    <scope>VARIANT PREBYCUSIS HIS-109</scope>
</reference>
<reference key="6">
    <citation type="journal article" date="2016" name="J. Cell Biol.">
        <title>Plastin 1 widens stereocilia by transforming actin filament packing from hexagonal to liquid.</title>
        <authorList>
            <person name="Krey J.F."/>
            <person name="Krystofiak E.S."/>
            <person name="Dumont R.A."/>
            <person name="Vijayakumar S."/>
            <person name="Choi D."/>
            <person name="Rivero F."/>
            <person name="Kachar B."/>
            <person name="Jones S.M."/>
            <person name="Barr-Gillespie P.G."/>
        </authorList>
    </citation>
    <scope>TISSUE SPECIFICITY</scope>
    <scope>SUBCELLULAR LOCATION</scope>
</reference>